<accession>A9IZW8</accession>
<sequence>MLIEQFICRKDNFGVLIHDEKSGMTAAIDAPESKAIHNALKRRNWTLHTIFVTHHHHDHVEALAELKQVYNAIVFGPAAEKNKIYHLDQTLQSDEKLLFGSQSLLALSTPGHTLGALSYYFPEKKLLFAGDTLFSLGCGRLFEGTAVQMLNSLKKLCKLPDETLLYCGHEYTKNNALFALTLDPHNQKLQQRAEEVLSLRAKNAMTLPVTLGQEKATNPFLRWNDPAIRKNLSMKDSTDEEVFAEIRKRKDNF</sequence>
<feature type="chain" id="PRO_1000087276" description="Hydroxyacylglutathione hydrolase">
    <location>
        <begin position="1"/>
        <end position="253"/>
    </location>
</feature>
<feature type="binding site" evidence="1">
    <location>
        <position position="54"/>
    </location>
    <ligand>
        <name>Zn(2+)</name>
        <dbReference type="ChEBI" id="CHEBI:29105"/>
        <label>1</label>
    </ligand>
</feature>
<feature type="binding site" evidence="1">
    <location>
        <position position="56"/>
    </location>
    <ligand>
        <name>Zn(2+)</name>
        <dbReference type="ChEBI" id="CHEBI:29105"/>
        <label>1</label>
    </ligand>
</feature>
<feature type="binding site" evidence="1">
    <location>
        <position position="58"/>
    </location>
    <ligand>
        <name>Zn(2+)</name>
        <dbReference type="ChEBI" id="CHEBI:29105"/>
        <label>2</label>
    </ligand>
</feature>
<feature type="binding site" evidence="1">
    <location>
        <position position="59"/>
    </location>
    <ligand>
        <name>Zn(2+)</name>
        <dbReference type="ChEBI" id="CHEBI:29105"/>
        <label>2</label>
    </ligand>
</feature>
<feature type="binding site" evidence="1">
    <location>
        <position position="112"/>
    </location>
    <ligand>
        <name>Zn(2+)</name>
        <dbReference type="ChEBI" id="CHEBI:29105"/>
        <label>1</label>
    </ligand>
</feature>
<feature type="binding site" evidence="1">
    <location>
        <position position="131"/>
    </location>
    <ligand>
        <name>Zn(2+)</name>
        <dbReference type="ChEBI" id="CHEBI:29105"/>
        <label>1</label>
    </ligand>
</feature>
<feature type="binding site" evidence="1">
    <location>
        <position position="131"/>
    </location>
    <ligand>
        <name>Zn(2+)</name>
        <dbReference type="ChEBI" id="CHEBI:29105"/>
        <label>2</label>
    </ligand>
</feature>
<feature type="binding site" evidence="1">
    <location>
        <position position="169"/>
    </location>
    <ligand>
        <name>Zn(2+)</name>
        <dbReference type="ChEBI" id="CHEBI:29105"/>
        <label>2</label>
    </ligand>
</feature>
<proteinExistence type="inferred from homology"/>
<protein>
    <recommendedName>
        <fullName evidence="1">Hydroxyacylglutathione hydrolase</fullName>
        <ecNumber evidence="1">3.1.2.6</ecNumber>
    </recommendedName>
    <alternativeName>
        <fullName evidence="1">Glyoxalase II</fullName>
        <shortName evidence="1">Glx II</shortName>
    </alternativeName>
</protein>
<keyword id="KW-0378">Hydrolase</keyword>
<keyword id="KW-0479">Metal-binding</keyword>
<keyword id="KW-0862">Zinc</keyword>
<evidence type="ECO:0000255" key="1">
    <source>
        <dbReference type="HAMAP-Rule" id="MF_01374"/>
    </source>
</evidence>
<name>GLO2_BART1</name>
<dbReference type="EC" id="3.1.2.6" evidence="1"/>
<dbReference type="EMBL" id="AM260525">
    <property type="protein sequence ID" value="CAK02633.1"/>
    <property type="molecule type" value="Genomic_DNA"/>
</dbReference>
<dbReference type="RefSeq" id="WP_012232626.1">
    <property type="nucleotide sequence ID" value="NC_010161.1"/>
</dbReference>
<dbReference type="SMR" id="A9IZW8"/>
<dbReference type="KEGG" id="btr:BT_2686"/>
<dbReference type="eggNOG" id="COG0491">
    <property type="taxonomic scope" value="Bacteria"/>
</dbReference>
<dbReference type="HOGENOM" id="CLU_030571_4_1_5"/>
<dbReference type="UniPathway" id="UPA00619">
    <property type="reaction ID" value="UER00676"/>
</dbReference>
<dbReference type="Proteomes" id="UP000001592">
    <property type="component" value="Chromosome"/>
</dbReference>
<dbReference type="GO" id="GO:0004416">
    <property type="term" value="F:hydroxyacylglutathione hydrolase activity"/>
    <property type="evidence" value="ECO:0007669"/>
    <property type="project" value="UniProtKB-UniRule"/>
</dbReference>
<dbReference type="GO" id="GO:0046872">
    <property type="term" value="F:metal ion binding"/>
    <property type="evidence" value="ECO:0007669"/>
    <property type="project" value="UniProtKB-KW"/>
</dbReference>
<dbReference type="GO" id="GO:0019243">
    <property type="term" value="P:methylglyoxal catabolic process to D-lactate via S-lactoyl-glutathione"/>
    <property type="evidence" value="ECO:0007669"/>
    <property type="project" value="InterPro"/>
</dbReference>
<dbReference type="CDD" id="cd07723">
    <property type="entry name" value="hydroxyacylglutathione_hydrolase_MBL-fold"/>
    <property type="match status" value="1"/>
</dbReference>
<dbReference type="Gene3D" id="3.60.15.10">
    <property type="entry name" value="Ribonuclease Z/Hydroxyacylglutathione hydrolase-like"/>
    <property type="match status" value="1"/>
</dbReference>
<dbReference type="HAMAP" id="MF_01374">
    <property type="entry name" value="Glyoxalase_2"/>
    <property type="match status" value="1"/>
</dbReference>
<dbReference type="InterPro" id="IPR035680">
    <property type="entry name" value="Clx_II_MBL"/>
</dbReference>
<dbReference type="InterPro" id="IPR050110">
    <property type="entry name" value="Glyoxalase_II_hydrolase"/>
</dbReference>
<dbReference type="InterPro" id="IPR032282">
    <property type="entry name" value="HAGH_C"/>
</dbReference>
<dbReference type="InterPro" id="IPR017782">
    <property type="entry name" value="Hydroxyacylglutathione_Hdrlase"/>
</dbReference>
<dbReference type="InterPro" id="IPR001279">
    <property type="entry name" value="Metallo-B-lactamas"/>
</dbReference>
<dbReference type="InterPro" id="IPR036866">
    <property type="entry name" value="RibonucZ/Hydroxyglut_hydro"/>
</dbReference>
<dbReference type="NCBIfam" id="TIGR03413">
    <property type="entry name" value="GSH_gloB"/>
    <property type="match status" value="1"/>
</dbReference>
<dbReference type="PANTHER" id="PTHR43705">
    <property type="entry name" value="HYDROXYACYLGLUTATHIONE HYDROLASE"/>
    <property type="match status" value="1"/>
</dbReference>
<dbReference type="PANTHER" id="PTHR43705:SF1">
    <property type="entry name" value="HYDROXYACYLGLUTATHIONE HYDROLASE GLOB"/>
    <property type="match status" value="1"/>
</dbReference>
<dbReference type="Pfam" id="PF16123">
    <property type="entry name" value="HAGH_C"/>
    <property type="match status" value="1"/>
</dbReference>
<dbReference type="Pfam" id="PF00753">
    <property type="entry name" value="Lactamase_B"/>
    <property type="match status" value="1"/>
</dbReference>
<dbReference type="PIRSF" id="PIRSF005457">
    <property type="entry name" value="Glx"/>
    <property type="match status" value="1"/>
</dbReference>
<dbReference type="SMART" id="SM00849">
    <property type="entry name" value="Lactamase_B"/>
    <property type="match status" value="1"/>
</dbReference>
<dbReference type="SUPFAM" id="SSF56281">
    <property type="entry name" value="Metallo-hydrolase/oxidoreductase"/>
    <property type="match status" value="1"/>
</dbReference>
<reference key="1">
    <citation type="journal article" date="2007" name="Nat. Genet.">
        <title>Genomic analysis of Bartonella identifies type IV secretion systems as host adaptability factors.</title>
        <authorList>
            <person name="Saenz H.L."/>
            <person name="Engel P."/>
            <person name="Stoeckli M.C."/>
            <person name="Lanz C."/>
            <person name="Raddatz G."/>
            <person name="Vayssier-Taussat M."/>
            <person name="Birtles R."/>
            <person name="Schuster S.C."/>
            <person name="Dehio C."/>
        </authorList>
    </citation>
    <scope>NUCLEOTIDE SEQUENCE [LARGE SCALE GENOMIC DNA]</scope>
    <source>
        <strain>CIP 105476 / IBS 506</strain>
    </source>
</reference>
<comment type="function">
    <text evidence="1">Thiolesterase that catalyzes the hydrolysis of S-D-lactoyl-glutathione to form glutathione and D-lactic acid.</text>
</comment>
<comment type="catalytic activity">
    <reaction evidence="1">
        <text>an S-(2-hydroxyacyl)glutathione + H2O = a 2-hydroxy carboxylate + glutathione + H(+)</text>
        <dbReference type="Rhea" id="RHEA:21864"/>
        <dbReference type="ChEBI" id="CHEBI:15377"/>
        <dbReference type="ChEBI" id="CHEBI:15378"/>
        <dbReference type="ChEBI" id="CHEBI:57925"/>
        <dbReference type="ChEBI" id="CHEBI:58896"/>
        <dbReference type="ChEBI" id="CHEBI:71261"/>
        <dbReference type="EC" id="3.1.2.6"/>
    </reaction>
</comment>
<comment type="cofactor">
    <cofactor evidence="1">
        <name>Zn(2+)</name>
        <dbReference type="ChEBI" id="CHEBI:29105"/>
    </cofactor>
    <text evidence="1">Binds 2 Zn(2+) ions per subunit.</text>
</comment>
<comment type="pathway">
    <text evidence="1">Secondary metabolite metabolism; methylglyoxal degradation; (R)-lactate from methylglyoxal: step 2/2.</text>
</comment>
<comment type="subunit">
    <text evidence="1">Monomer.</text>
</comment>
<comment type="similarity">
    <text evidence="1">Belongs to the metallo-beta-lactamase superfamily. Glyoxalase II family.</text>
</comment>
<gene>
    <name evidence="1" type="primary">gloB</name>
    <name type="ordered locus">BT_2686</name>
</gene>
<organism>
    <name type="scientific">Bartonella tribocorum (strain CIP 105476 / IBS 506)</name>
    <dbReference type="NCBI Taxonomy" id="382640"/>
    <lineage>
        <taxon>Bacteria</taxon>
        <taxon>Pseudomonadati</taxon>
        <taxon>Pseudomonadota</taxon>
        <taxon>Alphaproteobacteria</taxon>
        <taxon>Hyphomicrobiales</taxon>
        <taxon>Bartonellaceae</taxon>
        <taxon>Bartonella</taxon>
    </lineage>
</organism>